<keyword id="KW-0997">Cell inner membrane</keyword>
<keyword id="KW-1003">Cell membrane</keyword>
<keyword id="KW-0444">Lipid biosynthesis</keyword>
<keyword id="KW-0443">Lipid metabolism</keyword>
<keyword id="KW-0472">Membrane</keyword>
<keyword id="KW-0594">Phospholipid biosynthesis</keyword>
<keyword id="KW-1208">Phospholipid metabolism</keyword>
<keyword id="KW-0677">Repeat</keyword>
<keyword id="KW-0808">Transferase</keyword>
<keyword id="KW-0812">Transmembrane</keyword>
<keyword id="KW-1133">Transmembrane helix</keyword>
<protein>
    <recommendedName>
        <fullName evidence="1">Cardiolipin synthase A</fullName>
        <shortName evidence="1">CL synthase</shortName>
        <ecNumber evidence="1">2.7.8.-</ecNumber>
    </recommendedName>
</protein>
<gene>
    <name evidence="1" type="primary">clsA</name>
    <name type="synonym">cls</name>
    <name type="ordered locus">ECUMN_1546</name>
</gene>
<evidence type="ECO:0000255" key="1">
    <source>
        <dbReference type="HAMAP-Rule" id="MF_00190"/>
    </source>
</evidence>
<proteinExistence type="inferred from homology"/>
<reference key="1">
    <citation type="journal article" date="2009" name="PLoS Genet.">
        <title>Organised genome dynamics in the Escherichia coli species results in highly diverse adaptive paths.</title>
        <authorList>
            <person name="Touchon M."/>
            <person name="Hoede C."/>
            <person name="Tenaillon O."/>
            <person name="Barbe V."/>
            <person name="Baeriswyl S."/>
            <person name="Bidet P."/>
            <person name="Bingen E."/>
            <person name="Bonacorsi S."/>
            <person name="Bouchier C."/>
            <person name="Bouvet O."/>
            <person name="Calteau A."/>
            <person name="Chiapello H."/>
            <person name="Clermont O."/>
            <person name="Cruveiller S."/>
            <person name="Danchin A."/>
            <person name="Diard M."/>
            <person name="Dossat C."/>
            <person name="Karoui M.E."/>
            <person name="Frapy E."/>
            <person name="Garry L."/>
            <person name="Ghigo J.M."/>
            <person name="Gilles A.M."/>
            <person name="Johnson J."/>
            <person name="Le Bouguenec C."/>
            <person name="Lescat M."/>
            <person name="Mangenot S."/>
            <person name="Martinez-Jehanne V."/>
            <person name="Matic I."/>
            <person name="Nassif X."/>
            <person name="Oztas S."/>
            <person name="Petit M.A."/>
            <person name="Pichon C."/>
            <person name="Rouy Z."/>
            <person name="Ruf C.S."/>
            <person name="Schneider D."/>
            <person name="Tourret J."/>
            <person name="Vacherie B."/>
            <person name="Vallenet D."/>
            <person name="Medigue C."/>
            <person name="Rocha E.P.C."/>
            <person name="Denamur E."/>
        </authorList>
    </citation>
    <scope>NUCLEOTIDE SEQUENCE [LARGE SCALE GENOMIC DNA]</scope>
    <source>
        <strain>UMN026 / ExPEC</strain>
    </source>
</reference>
<sequence>MTTVYTLVSWLAILGYWLLIAGVTLRILMKRRAVPSAMAWLLIIYILPLVGIIAYLAVGELHLGKRRAERARAMWPSTAKWLNDLKACKHIFAEENSSVAAPLFKLCERRQGIAGVKGNQLQLMTESDDVMQALIRDIQLARHNIEMVFYIWQPGGMADQVAESLMAAARRGIHCRLMLDSAGSVAFFRSPWPELMRNAGIEVVEALKVNLMRVFLRRMDLRQHRKMIMIDNYIAYTGSMNMVDPRYFKQDAGVGQWIDLMARMEGPIATAMGIIYSCDWEIETGKRILPPPPDVNIMPFEQASGHTIHTIASGPGFPEDLIHQALLTAAYSAREYLIMTTPYFVPSDDLLHAICTAAQRGVDVSIILPRKNDSMLVGWASRAFFTELLAAGVKIYQFEGGLLHTKSVLVDGELSLVGTVNLDMRSLWLNFEITLAIDDKGFGADLAAVQDDYISRSRLLDARLWLKRPLWQRVAERLFYFFSPLL</sequence>
<name>CLSA_ECOLU</name>
<feature type="chain" id="PRO_1000118589" description="Cardiolipin synthase A">
    <location>
        <begin position="1"/>
        <end position="486"/>
    </location>
</feature>
<feature type="transmembrane region" description="Helical" evidence="1">
    <location>
        <begin position="3"/>
        <end position="23"/>
    </location>
</feature>
<feature type="transmembrane region" description="Helical" evidence="1">
    <location>
        <begin position="38"/>
        <end position="58"/>
    </location>
</feature>
<feature type="domain" description="PLD phosphodiesterase 1" evidence="1">
    <location>
        <begin position="219"/>
        <end position="246"/>
    </location>
</feature>
<feature type="domain" description="PLD phosphodiesterase 2" evidence="1">
    <location>
        <begin position="399"/>
        <end position="426"/>
    </location>
</feature>
<feature type="active site" evidence="1">
    <location>
        <position position="224"/>
    </location>
</feature>
<feature type="active site" evidence="1">
    <location>
        <position position="226"/>
    </location>
</feature>
<feature type="active site" evidence="1">
    <location>
        <position position="231"/>
    </location>
</feature>
<feature type="active site" evidence="1">
    <location>
        <position position="404"/>
    </location>
</feature>
<feature type="active site" evidence="1">
    <location>
        <position position="406"/>
    </location>
</feature>
<feature type="active site" evidence="1">
    <location>
        <position position="411"/>
    </location>
</feature>
<dbReference type="EC" id="2.7.8.-" evidence="1"/>
<dbReference type="EMBL" id="CU928163">
    <property type="protein sequence ID" value="CAR12753.1"/>
    <property type="molecule type" value="Genomic_DNA"/>
</dbReference>
<dbReference type="RefSeq" id="WP_000214516.1">
    <property type="nucleotide sequence ID" value="NC_011751.1"/>
</dbReference>
<dbReference type="RefSeq" id="YP_002412289.1">
    <property type="nucleotide sequence ID" value="NC_011751.1"/>
</dbReference>
<dbReference type="SMR" id="B7N460"/>
<dbReference type="STRING" id="585056.ECUMN_1546"/>
<dbReference type="GeneID" id="93775314"/>
<dbReference type="KEGG" id="eum:ECUMN_1546"/>
<dbReference type="PATRIC" id="fig|585056.7.peg.1744"/>
<dbReference type="HOGENOM" id="CLU_038053_1_0_6"/>
<dbReference type="Proteomes" id="UP000007097">
    <property type="component" value="Chromosome"/>
</dbReference>
<dbReference type="GO" id="GO:0005886">
    <property type="term" value="C:plasma membrane"/>
    <property type="evidence" value="ECO:0007669"/>
    <property type="project" value="UniProtKB-SubCell"/>
</dbReference>
<dbReference type="GO" id="GO:0008808">
    <property type="term" value="F:cardiolipin synthase activity"/>
    <property type="evidence" value="ECO:0007669"/>
    <property type="project" value="InterPro"/>
</dbReference>
<dbReference type="GO" id="GO:0032049">
    <property type="term" value="P:cardiolipin biosynthetic process"/>
    <property type="evidence" value="ECO:0007669"/>
    <property type="project" value="InterPro"/>
</dbReference>
<dbReference type="CDD" id="cd09152">
    <property type="entry name" value="PLDc_EcCLS_like_1"/>
    <property type="match status" value="1"/>
</dbReference>
<dbReference type="CDD" id="cd09158">
    <property type="entry name" value="PLDc_EcCLS_like_2"/>
    <property type="match status" value="1"/>
</dbReference>
<dbReference type="FunFam" id="3.30.870.10:FF:000002">
    <property type="entry name" value="Cardiolipin synthase A"/>
    <property type="match status" value="1"/>
</dbReference>
<dbReference type="FunFam" id="3.30.870.10:FF:000003">
    <property type="entry name" value="Cardiolipin synthase A"/>
    <property type="match status" value="1"/>
</dbReference>
<dbReference type="Gene3D" id="3.30.870.10">
    <property type="entry name" value="Endonuclease Chain A"/>
    <property type="match status" value="2"/>
</dbReference>
<dbReference type="HAMAP" id="MF_00190">
    <property type="entry name" value="Cardiolipin_synth_ClsA"/>
    <property type="match status" value="1"/>
</dbReference>
<dbReference type="InterPro" id="IPR022924">
    <property type="entry name" value="Cardiolipin_synthase"/>
</dbReference>
<dbReference type="InterPro" id="IPR030840">
    <property type="entry name" value="CL_synthase_A"/>
</dbReference>
<dbReference type="InterPro" id="IPR027379">
    <property type="entry name" value="CLS_N"/>
</dbReference>
<dbReference type="InterPro" id="IPR025202">
    <property type="entry name" value="PLD-like_dom"/>
</dbReference>
<dbReference type="InterPro" id="IPR001736">
    <property type="entry name" value="PLipase_D/transphosphatidylase"/>
</dbReference>
<dbReference type="NCBIfam" id="TIGR04265">
    <property type="entry name" value="bac_cardiolipin"/>
    <property type="match status" value="1"/>
</dbReference>
<dbReference type="PANTHER" id="PTHR21248">
    <property type="entry name" value="CARDIOLIPIN SYNTHASE"/>
    <property type="match status" value="1"/>
</dbReference>
<dbReference type="PANTHER" id="PTHR21248:SF22">
    <property type="entry name" value="PHOSPHOLIPASE D"/>
    <property type="match status" value="1"/>
</dbReference>
<dbReference type="Pfam" id="PF13091">
    <property type="entry name" value="PLDc_2"/>
    <property type="match status" value="2"/>
</dbReference>
<dbReference type="Pfam" id="PF13396">
    <property type="entry name" value="PLDc_N"/>
    <property type="match status" value="1"/>
</dbReference>
<dbReference type="SMART" id="SM00155">
    <property type="entry name" value="PLDc"/>
    <property type="match status" value="2"/>
</dbReference>
<dbReference type="SUPFAM" id="SSF56024">
    <property type="entry name" value="Phospholipase D/nuclease"/>
    <property type="match status" value="2"/>
</dbReference>
<dbReference type="PROSITE" id="PS50035">
    <property type="entry name" value="PLD"/>
    <property type="match status" value="2"/>
</dbReference>
<organism>
    <name type="scientific">Escherichia coli O17:K52:H18 (strain UMN026 / ExPEC)</name>
    <dbReference type="NCBI Taxonomy" id="585056"/>
    <lineage>
        <taxon>Bacteria</taxon>
        <taxon>Pseudomonadati</taxon>
        <taxon>Pseudomonadota</taxon>
        <taxon>Gammaproteobacteria</taxon>
        <taxon>Enterobacterales</taxon>
        <taxon>Enterobacteriaceae</taxon>
        <taxon>Escherichia</taxon>
    </lineage>
</organism>
<comment type="function">
    <text evidence="1">Catalyzes the reversible phosphatidyl group transfer from one phosphatidylglycerol molecule to another to form cardiolipin (CL) (diphosphatidylglycerol) and glycerol.</text>
</comment>
<comment type="catalytic activity">
    <reaction evidence="1">
        <text>2 a 1,2-diacyl-sn-glycero-3-phospho-(1'-sn-glycerol) = a cardiolipin + glycerol</text>
        <dbReference type="Rhea" id="RHEA:31451"/>
        <dbReference type="ChEBI" id="CHEBI:17754"/>
        <dbReference type="ChEBI" id="CHEBI:62237"/>
        <dbReference type="ChEBI" id="CHEBI:64716"/>
    </reaction>
</comment>
<comment type="subcellular location">
    <subcellularLocation>
        <location evidence="1">Cell inner membrane</location>
        <topology evidence="1">Multi-pass membrane protein</topology>
    </subcellularLocation>
</comment>
<comment type="similarity">
    <text evidence="1">Belongs to the phospholipase D family. Cardiolipin synthase subfamily. ClsA sub-subfamily.</text>
</comment>
<accession>B7N460</accession>